<protein>
    <recommendedName>
        <fullName evidence="1">Large ribosomal subunit protein uL6</fullName>
    </recommendedName>
    <alternativeName>
        <fullName evidence="2">50S ribosomal protein L6</fullName>
    </alternativeName>
</protein>
<evidence type="ECO:0000255" key="1">
    <source>
        <dbReference type="HAMAP-Rule" id="MF_01365"/>
    </source>
</evidence>
<evidence type="ECO:0000305" key="2"/>
<accession>A6T3I9</accession>
<gene>
    <name evidence="1" type="primary">rplF</name>
    <name type="ordered locus">mma_3396</name>
</gene>
<keyword id="KW-0687">Ribonucleoprotein</keyword>
<keyword id="KW-0689">Ribosomal protein</keyword>
<keyword id="KW-0694">RNA-binding</keyword>
<keyword id="KW-0699">rRNA-binding</keyword>
<sequence>MSRVGKMPIALPSGAEATITAAQITVKGPLGSLTQSLNGLVNIENDNGTLNFKVANDSREANAMSGTLRALVNNMVNGVTKGFEKKLTLVGVGYRAAAQGDKLNLSLGFSHPVVHQMPQGVKVETPTQTEILIKGIDRQKVGQVAAEVRAYREPEPYKGKGVRYSDEVVVIKETKKK</sequence>
<comment type="function">
    <text evidence="1">This protein binds to the 23S rRNA, and is important in its secondary structure. It is located near the subunit interface in the base of the L7/L12 stalk, and near the tRNA binding site of the peptidyltransferase center.</text>
</comment>
<comment type="subunit">
    <text evidence="1">Part of the 50S ribosomal subunit.</text>
</comment>
<comment type="similarity">
    <text evidence="1">Belongs to the universal ribosomal protein uL6 family.</text>
</comment>
<proteinExistence type="inferred from homology"/>
<organism>
    <name type="scientific">Janthinobacterium sp. (strain Marseille)</name>
    <name type="common">Minibacterium massiliensis</name>
    <dbReference type="NCBI Taxonomy" id="375286"/>
    <lineage>
        <taxon>Bacteria</taxon>
        <taxon>Pseudomonadati</taxon>
        <taxon>Pseudomonadota</taxon>
        <taxon>Betaproteobacteria</taxon>
        <taxon>Burkholderiales</taxon>
        <taxon>Oxalobacteraceae</taxon>
        <taxon>Janthinobacterium</taxon>
    </lineage>
</organism>
<name>RL6_JANMA</name>
<feature type="chain" id="PRO_1000055243" description="Large ribosomal subunit protein uL6">
    <location>
        <begin position="1"/>
        <end position="177"/>
    </location>
</feature>
<dbReference type="EMBL" id="CP000269">
    <property type="protein sequence ID" value="ABR88995.1"/>
    <property type="molecule type" value="Genomic_DNA"/>
</dbReference>
<dbReference type="RefSeq" id="WP_012081236.1">
    <property type="nucleotide sequence ID" value="NC_009659.1"/>
</dbReference>
<dbReference type="SMR" id="A6T3I9"/>
<dbReference type="STRING" id="375286.mma_3396"/>
<dbReference type="KEGG" id="mms:mma_3396"/>
<dbReference type="eggNOG" id="COG0097">
    <property type="taxonomic scope" value="Bacteria"/>
</dbReference>
<dbReference type="HOGENOM" id="CLU_065464_1_2_4"/>
<dbReference type="OrthoDB" id="9805007at2"/>
<dbReference type="Proteomes" id="UP000006388">
    <property type="component" value="Chromosome"/>
</dbReference>
<dbReference type="GO" id="GO:0022625">
    <property type="term" value="C:cytosolic large ribosomal subunit"/>
    <property type="evidence" value="ECO:0007669"/>
    <property type="project" value="TreeGrafter"/>
</dbReference>
<dbReference type="GO" id="GO:0019843">
    <property type="term" value="F:rRNA binding"/>
    <property type="evidence" value="ECO:0007669"/>
    <property type="project" value="UniProtKB-UniRule"/>
</dbReference>
<dbReference type="GO" id="GO:0003735">
    <property type="term" value="F:structural constituent of ribosome"/>
    <property type="evidence" value="ECO:0007669"/>
    <property type="project" value="InterPro"/>
</dbReference>
<dbReference type="GO" id="GO:0002181">
    <property type="term" value="P:cytoplasmic translation"/>
    <property type="evidence" value="ECO:0007669"/>
    <property type="project" value="TreeGrafter"/>
</dbReference>
<dbReference type="FunFam" id="3.90.930.12:FF:000001">
    <property type="entry name" value="50S ribosomal protein L6"/>
    <property type="match status" value="1"/>
</dbReference>
<dbReference type="FunFam" id="3.90.930.12:FF:000002">
    <property type="entry name" value="50S ribosomal protein L6"/>
    <property type="match status" value="1"/>
</dbReference>
<dbReference type="Gene3D" id="3.90.930.12">
    <property type="entry name" value="Ribosomal protein L6, alpha-beta domain"/>
    <property type="match status" value="2"/>
</dbReference>
<dbReference type="HAMAP" id="MF_01365_B">
    <property type="entry name" value="Ribosomal_uL6_B"/>
    <property type="match status" value="1"/>
</dbReference>
<dbReference type="InterPro" id="IPR000702">
    <property type="entry name" value="Ribosomal_uL6-like"/>
</dbReference>
<dbReference type="InterPro" id="IPR036789">
    <property type="entry name" value="Ribosomal_uL6-like_a/b-dom_sf"/>
</dbReference>
<dbReference type="InterPro" id="IPR020040">
    <property type="entry name" value="Ribosomal_uL6_a/b-dom"/>
</dbReference>
<dbReference type="InterPro" id="IPR019906">
    <property type="entry name" value="Ribosomal_uL6_bac-type"/>
</dbReference>
<dbReference type="InterPro" id="IPR002358">
    <property type="entry name" value="Ribosomal_uL6_CS"/>
</dbReference>
<dbReference type="NCBIfam" id="TIGR03654">
    <property type="entry name" value="L6_bact"/>
    <property type="match status" value="1"/>
</dbReference>
<dbReference type="PANTHER" id="PTHR11655">
    <property type="entry name" value="60S/50S RIBOSOMAL PROTEIN L6/L9"/>
    <property type="match status" value="1"/>
</dbReference>
<dbReference type="PANTHER" id="PTHR11655:SF14">
    <property type="entry name" value="LARGE RIBOSOMAL SUBUNIT PROTEIN UL6M"/>
    <property type="match status" value="1"/>
</dbReference>
<dbReference type="Pfam" id="PF00347">
    <property type="entry name" value="Ribosomal_L6"/>
    <property type="match status" value="2"/>
</dbReference>
<dbReference type="PIRSF" id="PIRSF002162">
    <property type="entry name" value="Ribosomal_L6"/>
    <property type="match status" value="1"/>
</dbReference>
<dbReference type="PRINTS" id="PR00059">
    <property type="entry name" value="RIBOSOMALL6"/>
</dbReference>
<dbReference type="SUPFAM" id="SSF56053">
    <property type="entry name" value="Ribosomal protein L6"/>
    <property type="match status" value="2"/>
</dbReference>
<dbReference type="PROSITE" id="PS00525">
    <property type="entry name" value="RIBOSOMAL_L6_1"/>
    <property type="match status" value="1"/>
</dbReference>
<reference key="1">
    <citation type="journal article" date="2007" name="PLoS Genet.">
        <title>Genome analysis of Minibacterium massiliensis highlights the convergent evolution of water-living bacteria.</title>
        <authorList>
            <person name="Audic S."/>
            <person name="Robert C."/>
            <person name="Campagna B."/>
            <person name="Parinello H."/>
            <person name="Claverie J.-M."/>
            <person name="Raoult D."/>
            <person name="Drancourt M."/>
        </authorList>
    </citation>
    <scope>NUCLEOTIDE SEQUENCE [LARGE SCALE GENOMIC DNA]</scope>
    <source>
        <strain>Marseille</strain>
    </source>
</reference>